<organism>
    <name type="scientific">Pasteurella multocida (strain Pm70)</name>
    <dbReference type="NCBI Taxonomy" id="272843"/>
    <lineage>
        <taxon>Bacteria</taxon>
        <taxon>Pseudomonadati</taxon>
        <taxon>Pseudomonadota</taxon>
        <taxon>Gammaproteobacteria</taxon>
        <taxon>Pasteurellales</taxon>
        <taxon>Pasteurellaceae</taxon>
        <taxon>Pasteurella</taxon>
    </lineage>
</organism>
<protein>
    <recommendedName>
        <fullName evidence="1">Ribosomal RNA small subunit methyltransferase J</fullName>
        <ecNumber evidence="1">2.1.1.242</ecNumber>
    </recommendedName>
    <alternativeName>
        <fullName evidence="1">16S rRNA m2G1516 methyltransferase</fullName>
    </alternativeName>
    <alternativeName>
        <fullName evidence="1">rRNA (guanine-N(2)-)-methyltransferase</fullName>
    </alternativeName>
</protein>
<gene>
    <name evidence="1" type="primary">rsmJ</name>
    <name type="ordered locus">PM1804</name>
</gene>
<feature type="chain" id="PRO_0000212080" description="Ribosomal RNA small subunit methyltransferase J">
    <location>
        <begin position="1"/>
        <end position="252"/>
    </location>
</feature>
<feature type="binding site" evidence="1">
    <location>
        <begin position="105"/>
        <end position="106"/>
    </location>
    <ligand>
        <name>S-adenosyl-L-methionine</name>
        <dbReference type="ChEBI" id="CHEBI:59789"/>
    </ligand>
</feature>
<feature type="binding site" evidence="1">
    <location>
        <begin position="121"/>
        <end position="122"/>
    </location>
    <ligand>
        <name>S-adenosyl-L-methionine</name>
        <dbReference type="ChEBI" id="CHEBI:59789"/>
    </ligand>
</feature>
<feature type="binding site" evidence="1">
    <location>
        <position position="175"/>
    </location>
    <ligand>
        <name>S-adenosyl-L-methionine</name>
        <dbReference type="ChEBI" id="CHEBI:59789"/>
    </ligand>
</feature>
<name>RSMJ_PASMU</name>
<reference key="1">
    <citation type="journal article" date="2001" name="Proc. Natl. Acad. Sci. U.S.A.">
        <title>Complete genomic sequence of Pasteurella multocida Pm70.</title>
        <authorList>
            <person name="May B.J."/>
            <person name="Zhang Q."/>
            <person name="Li L.L."/>
            <person name="Paustian M.L."/>
            <person name="Whittam T.S."/>
            <person name="Kapur V."/>
        </authorList>
    </citation>
    <scope>NUCLEOTIDE SEQUENCE [LARGE SCALE GENOMIC DNA]</scope>
    <source>
        <strain>Pm70</strain>
    </source>
</reference>
<sequence length="252" mass="28006">MNIQLICETENPEKFTALCTQYGLVHDPESYLALVQTYDEQGQVRLELRKLDEAKLGAVFVDFVAGAMAHRRKFGGGRGEAVAKAVGIKSGYLPTVIDATAGLGRDAFVLASIGCRVRLVERHPVVRLLLQDGLQRAYADSEIGEMLQQNMQLLPVSHIAQLNPALDCVDVVYLDPMYPHKPKSALVKKEMRVFQHLVGADLDADNLLEPALALANKRVVVKRPDYAPFLAQQSPHFSRETKNHRFDIYLTG</sequence>
<accession>Q9CK31</accession>
<keyword id="KW-0963">Cytoplasm</keyword>
<keyword id="KW-0489">Methyltransferase</keyword>
<keyword id="KW-1185">Reference proteome</keyword>
<keyword id="KW-0698">rRNA processing</keyword>
<keyword id="KW-0949">S-adenosyl-L-methionine</keyword>
<keyword id="KW-0808">Transferase</keyword>
<dbReference type="EC" id="2.1.1.242" evidence="1"/>
<dbReference type="EMBL" id="AE004439">
    <property type="protein sequence ID" value="AAK03888.1"/>
    <property type="molecule type" value="Genomic_DNA"/>
</dbReference>
<dbReference type="RefSeq" id="WP_010907347.1">
    <property type="nucleotide sequence ID" value="NC_002663.1"/>
</dbReference>
<dbReference type="SMR" id="Q9CK31"/>
<dbReference type="STRING" id="272843.PM1804"/>
<dbReference type="EnsemblBacteria" id="AAK03888">
    <property type="protein sequence ID" value="AAK03888"/>
    <property type="gene ID" value="PM1804"/>
</dbReference>
<dbReference type="KEGG" id="pmu:PM1804"/>
<dbReference type="HOGENOM" id="CLU_076324_0_0_6"/>
<dbReference type="OrthoDB" id="3191794at2"/>
<dbReference type="Proteomes" id="UP000000809">
    <property type="component" value="Chromosome"/>
</dbReference>
<dbReference type="GO" id="GO:0005737">
    <property type="term" value="C:cytoplasm"/>
    <property type="evidence" value="ECO:0007669"/>
    <property type="project" value="UniProtKB-SubCell"/>
</dbReference>
<dbReference type="GO" id="GO:0008990">
    <property type="term" value="F:rRNA (guanine-N2-)-methyltransferase activity"/>
    <property type="evidence" value="ECO:0007669"/>
    <property type="project" value="UniProtKB-UniRule"/>
</dbReference>
<dbReference type="Gene3D" id="3.40.50.150">
    <property type="entry name" value="Vaccinia Virus protein VP39"/>
    <property type="match status" value="1"/>
</dbReference>
<dbReference type="Gene3D" id="3.40.1630.10">
    <property type="entry name" value="YhiQ-like domain"/>
    <property type="match status" value="1"/>
</dbReference>
<dbReference type="HAMAP" id="MF_01523">
    <property type="entry name" value="16SrRNA_methyltr_J"/>
    <property type="match status" value="1"/>
</dbReference>
<dbReference type="InterPro" id="IPR007536">
    <property type="entry name" value="16SrRNA_methylTrfase_J"/>
</dbReference>
<dbReference type="InterPro" id="IPR029063">
    <property type="entry name" value="SAM-dependent_MTases_sf"/>
</dbReference>
<dbReference type="PANTHER" id="PTHR36112">
    <property type="entry name" value="RIBOSOMAL RNA SMALL SUBUNIT METHYLTRANSFERASE J"/>
    <property type="match status" value="1"/>
</dbReference>
<dbReference type="PANTHER" id="PTHR36112:SF1">
    <property type="entry name" value="RIBOSOMAL RNA SMALL SUBUNIT METHYLTRANSFERASE J"/>
    <property type="match status" value="1"/>
</dbReference>
<dbReference type="Pfam" id="PF04445">
    <property type="entry name" value="SAM_MT"/>
    <property type="match status" value="1"/>
</dbReference>
<dbReference type="SUPFAM" id="SSF53335">
    <property type="entry name" value="S-adenosyl-L-methionine-dependent methyltransferases"/>
    <property type="match status" value="1"/>
</dbReference>
<comment type="function">
    <text evidence="1">Specifically methylates the guanosine in position 1516 of 16S rRNA.</text>
</comment>
<comment type="catalytic activity">
    <reaction evidence="1">
        <text>guanosine(1516) in 16S rRNA + S-adenosyl-L-methionine = N(2)-methylguanosine(1516) in 16S rRNA + S-adenosyl-L-homocysteine + H(+)</text>
        <dbReference type="Rhea" id="RHEA:43220"/>
        <dbReference type="Rhea" id="RHEA-COMP:10412"/>
        <dbReference type="Rhea" id="RHEA-COMP:10413"/>
        <dbReference type="ChEBI" id="CHEBI:15378"/>
        <dbReference type="ChEBI" id="CHEBI:57856"/>
        <dbReference type="ChEBI" id="CHEBI:59789"/>
        <dbReference type="ChEBI" id="CHEBI:74269"/>
        <dbReference type="ChEBI" id="CHEBI:74481"/>
        <dbReference type="EC" id="2.1.1.242"/>
    </reaction>
</comment>
<comment type="subcellular location">
    <subcellularLocation>
        <location evidence="1">Cytoplasm</location>
    </subcellularLocation>
</comment>
<comment type="similarity">
    <text evidence="1">Belongs to the methyltransferase superfamily. RsmJ family.</text>
</comment>
<evidence type="ECO:0000255" key="1">
    <source>
        <dbReference type="HAMAP-Rule" id="MF_01523"/>
    </source>
</evidence>
<proteinExistence type="inferred from homology"/>